<organism>
    <name type="scientific">Streptococcus agalactiae serotype Ia (strain ATCC 27591 / A909 / CDC SS700)</name>
    <dbReference type="NCBI Taxonomy" id="205921"/>
    <lineage>
        <taxon>Bacteria</taxon>
        <taxon>Bacillati</taxon>
        <taxon>Bacillota</taxon>
        <taxon>Bacilli</taxon>
        <taxon>Lactobacillales</taxon>
        <taxon>Streptococcaceae</taxon>
        <taxon>Streptococcus</taxon>
    </lineage>
</organism>
<dbReference type="EC" id="6.1.1.9" evidence="1"/>
<dbReference type="EMBL" id="CP000114">
    <property type="protein sequence ID" value="ABA44498.1"/>
    <property type="molecule type" value="Genomic_DNA"/>
</dbReference>
<dbReference type="RefSeq" id="WP_000032190.1">
    <property type="nucleotide sequence ID" value="NC_007432.1"/>
</dbReference>
<dbReference type="SMR" id="Q3K2S4"/>
<dbReference type="KEGG" id="sak:SAK_0547"/>
<dbReference type="HOGENOM" id="CLU_001493_0_2_9"/>
<dbReference type="GO" id="GO:0005829">
    <property type="term" value="C:cytosol"/>
    <property type="evidence" value="ECO:0007669"/>
    <property type="project" value="TreeGrafter"/>
</dbReference>
<dbReference type="GO" id="GO:0002161">
    <property type="term" value="F:aminoacyl-tRNA deacylase activity"/>
    <property type="evidence" value="ECO:0007669"/>
    <property type="project" value="InterPro"/>
</dbReference>
<dbReference type="GO" id="GO:0005524">
    <property type="term" value="F:ATP binding"/>
    <property type="evidence" value="ECO:0007669"/>
    <property type="project" value="UniProtKB-UniRule"/>
</dbReference>
<dbReference type="GO" id="GO:0004832">
    <property type="term" value="F:valine-tRNA ligase activity"/>
    <property type="evidence" value="ECO:0007669"/>
    <property type="project" value="UniProtKB-UniRule"/>
</dbReference>
<dbReference type="GO" id="GO:0006438">
    <property type="term" value="P:valyl-tRNA aminoacylation"/>
    <property type="evidence" value="ECO:0007669"/>
    <property type="project" value="UniProtKB-UniRule"/>
</dbReference>
<dbReference type="CDD" id="cd07962">
    <property type="entry name" value="Anticodon_Ia_Val"/>
    <property type="match status" value="1"/>
</dbReference>
<dbReference type="CDD" id="cd00817">
    <property type="entry name" value="ValRS_core"/>
    <property type="match status" value="1"/>
</dbReference>
<dbReference type="FunFam" id="1.10.287.380:FF:000001">
    <property type="entry name" value="Valine--tRNA ligase"/>
    <property type="match status" value="1"/>
</dbReference>
<dbReference type="FunFam" id="1.10.730.10:FF:000014">
    <property type="entry name" value="Valine--tRNA ligase"/>
    <property type="match status" value="1"/>
</dbReference>
<dbReference type="FunFam" id="3.40.50.620:FF:000032">
    <property type="entry name" value="Valine--tRNA ligase"/>
    <property type="match status" value="1"/>
</dbReference>
<dbReference type="FunFam" id="3.40.50.620:FF:000098">
    <property type="entry name" value="Valine--tRNA ligase"/>
    <property type="match status" value="1"/>
</dbReference>
<dbReference type="FunFam" id="3.90.740.10:FF:000005">
    <property type="entry name" value="Valine--tRNA ligase, mitochondrial"/>
    <property type="match status" value="1"/>
</dbReference>
<dbReference type="Gene3D" id="3.40.50.620">
    <property type="entry name" value="HUPs"/>
    <property type="match status" value="3"/>
</dbReference>
<dbReference type="Gene3D" id="1.10.730.10">
    <property type="entry name" value="Isoleucyl-tRNA Synthetase, Domain 1"/>
    <property type="match status" value="1"/>
</dbReference>
<dbReference type="Gene3D" id="1.10.287.380">
    <property type="entry name" value="Valyl-tRNA synthetase, C-terminal domain"/>
    <property type="match status" value="1"/>
</dbReference>
<dbReference type="Gene3D" id="3.90.740.10">
    <property type="entry name" value="Valyl/Leucyl/Isoleucyl-tRNA synthetase, editing domain"/>
    <property type="match status" value="1"/>
</dbReference>
<dbReference type="HAMAP" id="MF_02004">
    <property type="entry name" value="Val_tRNA_synth_type1"/>
    <property type="match status" value="1"/>
</dbReference>
<dbReference type="InterPro" id="IPR001412">
    <property type="entry name" value="aa-tRNA-synth_I_CS"/>
</dbReference>
<dbReference type="InterPro" id="IPR002300">
    <property type="entry name" value="aa-tRNA-synth_Ia"/>
</dbReference>
<dbReference type="InterPro" id="IPR033705">
    <property type="entry name" value="Anticodon_Ia_Val"/>
</dbReference>
<dbReference type="InterPro" id="IPR013155">
    <property type="entry name" value="M/V/L/I-tRNA-synth_anticd-bd"/>
</dbReference>
<dbReference type="InterPro" id="IPR014729">
    <property type="entry name" value="Rossmann-like_a/b/a_fold"/>
</dbReference>
<dbReference type="InterPro" id="IPR010978">
    <property type="entry name" value="tRNA-bd_arm"/>
</dbReference>
<dbReference type="InterPro" id="IPR009080">
    <property type="entry name" value="tRNAsynth_Ia_anticodon-bd"/>
</dbReference>
<dbReference type="InterPro" id="IPR037118">
    <property type="entry name" value="Val-tRNA_synth_C_sf"/>
</dbReference>
<dbReference type="InterPro" id="IPR019499">
    <property type="entry name" value="Val-tRNA_synth_tRNA-bd"/>
</dbReference>
<dbReference type="InterPro" id="IPR009008">
    <property type="entry name" value="Val/Leu/Ile-tRNA-synth_edit"/>
</dbReference>
<dbReference type="InterPro" id="IPR002303">
    <property type="entry name" value="Valyl-tRNA_ligase"/>
</dbReference>
<dbReference type="NCBIfam" id="NF004349">
    <property type="entry name" value="PRK05729.1"/>
    <property type="match status" value="1"/>
</dbReference>
<dbReference type="NCBIfam" id="TIGR00422">
    <property type="entry name" value="valS"/>
    <property type="match status" value="1"/>
</dbReference>
<dbReference type="PANTHER" id="PTHR11946:SF93">
    <property type="entry name" value="VALINE--TRNA LIGASE, CHLOROPLASTIC_MITOCHONDRIAL 2"/>
    <property type="match status" value="1"/>
</dbReference>
<dbReference type="PANTHER" id="PTHR11946">
    <property type="entry name" value="VALYL-TRNA SYNTHETASES"/>
    <property type="match status" value="1"/>
</dbReference>
<dbReference type="Pfam" id="PF08264">
    <property type="entry name" value="Anticodon_1"/>
    <property type="match status" value="1"/>
</dbReference>
<dbReference type="Pfam" id="PF00133">
    <property type="entry name" value="tRNA-synt_1"/>
    <property type="match status" value="2"/>
</dbReference>
<dbReference type="Pfam" id="PF10458">
    <property type="entry name" value="Val_tRNA-synt_C"/>
    <property type="match status" value="1"/>
</dbReference>
<dbReference type="PRINTS" id="PR00986">
    <property type="entry name" value="TRNASYNTHVAL"/>
</dbReference>
<dbReference type="SUPFAM" id="SSF47323">
    <property type="entry name" value="Anticodon-binding domain of a subclass of class I aminoacyl-tRNA synthetases"/>
    <property type="match status" value="1"/>
</dbReference>
<dbReference type="SUPFAM" id="SSF52374">
    <property type="entry name" value="Nucleotidylyl transferase"/>
    <property type="match status" value="1"/>
</dbReference>
<dbReference type="SUPFAM" id="SSF46589">
    <property type="entry name" value="tRNA-binding arm"/>
    <property type="match status" value="1"/>
</dbReference>
<dbReference type="SUPFAM" id="SSF50677">
    <property type="entry name" value="ValRS/IleRS/LeuRS editing domain"/>
    <property type="match status" value="1"/>
</dbReference>
<dbReference type="PROSITE" id="PS00178">
    <property type="entry name" value="AA_TRNA_LIGASE_I"/>
    <property type="match status" value="1"/>
</dbReference>
<gene>
    <name evidence="1" type="primary">valS</name>
    <name type="ordered locus">SAK_0547</name>
</gene>
<sequence length="884" mass="101295">MSKELSPKYNPAEVEAGRYQTWLDQDVFKPSGDAEAKPYSIVIPPPNVTGKLHLGHAWDTTLQDIIIRQKRMQGFDTLWLPGMDHAGIATQAKVEERLREQGISRYDLGREKFLDKVWEWKDEYAATIKSQWGKMGLSVDYSRERFTLDEGLSKAVRKVFVDLYNRGWIYRGEFIINWDPAARTALSDIEVIHKDVEGAFYHMNYMLEDGSRALEVATTRPETMFGDVAVAVNPEDPRYKDLIGQNVILPIINKPIPIVADEHADPEFGTGVVKITPAHDPNDFAVGQRHNLPQVNVMNDDGTMNELADEFNGMDRFEARKAVVAKLESLGNLVKIEKMTHSVGHSERTGVVVEPRLSTQWFVKMDQLAKNAIANQDTEDKVEFYPPRFNDTFMSWMENVHDWVISRQLWWGHQIPAWYNVNGEMYVGEDAPEGDGWTQDEDVLDTWFSSALWPFSTMGWPDTEAADFKRYFPTSTLVTGYDIIFFWVSRMIFQSLEFTGRQPFSNVLIHGLIRDEEGRKMSKSLGNGIDPMDVIEKYGADALRWFLSNGSAPGQDVRFSYEKMDASWNFINKIWNISRYILMNNEGLTLDQARENVEKVVNSQVGNVTDRWILHNLNETVGKVTENFDKFEFGVAGHILYNFIWEEFANWYVELTKEVLYSDNEDEKVVTRSVLLYTLDQILRLLHPIMPFVTEEIFGQYAEGSIVLASYPQVNATFENQTAHKGVESLKDLIRSVRNSRAEVNVAPSKPITILVKTSDSELESFFKDNSNYIKRFTNPETLEISSAITAPELAMTSIITGAEIFLPLADLLNVEEELARLEKELAKWQKELNMVGKKLSNERFVANAKPEVVQKEKDKQTDYQTKYDATIARIEEMKKINND</sequence>
<reference key="1">
    <citation type="journal article" date="2005" name="Proc. Natl. Acad. Sci. U.S.A.">
        <title>Genome analysis of multiple pathogenic isolates of Streptococcus agalactiae: implications for the microbial 'pan-genome'.</title>
        <authorList>
            <person name="Tettelin H."/>
            <person name="Masignani V."/>
            <person name="Cieslewicz M.J."/>
            <person name="Donati C."/>
            <person name="Medini D."/>
            <person name="Ward N.L."/>
            <person name="Angiuoli S.V."/>
            <person name="Crabtree J."/>
            <person name="Jones A.L."/>
            <person name="Durkin A.S."/>
            <person name="DeBoy R.T."/>
            <person name="Davidsen T.M."/>
            <person name="Mora M."/>
            <person name="Scarselli M."/>
            <person name="Margarit y Ros I."/>
            <person name="Peterson J.D."/>
            <person name="Hauser C.R."/>
            <person name="Sundaram J.P."/>
            <person name="Nelson W.C."/>
            <person name="Madupu R."/>
            <person name="Brinkac L.M."/>
            <person name="Dodson R.J."/>
            <person name="Rosovitz M.J."/>
            <person name="Sullivan S.A."/>
            <person name="Daugherty S.C."/>
            <person name="Haft D.H."/>
            <person name="Selengut J."/>
            <person name="Gwinn M.L."/>
            <person name="Zhou L."/>
            <person name="Zafar N."/>
            <person name="Khouri H."/>
            <person name="Radune D."/>
            <person name="Dimitrov G."/>
            <person name="Watkins K."/>
            <person name="O'Connor K.J."/>
            <person name="Smith S."/>
            <person name="Utterback T.R."/>
            <person name="White O."/>
            <person name="Rubens C.E."/>
            <person name="Grandi G."/>
            <person name="Madoff L.C."/>
            <person name="Kasper D.L."/>
            <person name="Telford J.L."/>
            <person name="Wessels M.R."/>
            <person name="Rappuoli R."/>
            <person name="Fraser C.M."/>
        </authorList>
    </citation>
    <scope>NUCLEOTIDE SEQUENCE [LARGE SCALE GENOMIC DNA]</scope>
    <source>
        <strain>ATCC 27591 / A909 / CDC SS700</strain>
    </source>
</reference>
<name>SYV_STRA1</name>
<comment type="function">
    <text evidence="1">Catalyzes the attachment of valine to tRNA(Val). As ValRS can inadvertently accommodate and process structurally similar amino acids such as threonine, to avoid such errors, it has a 'posttransfer' editing activity that hydrolyzes mischarged Thr-tRNA(Val) in a tRNA-dependent manner.</text>
</comment>
<comment type="catalytic activity">
    <reaction evidence="1">
        <text>tRNA(Val) + L-valine + ATP = L-valyl-tRNA(Val) + AMP + diphosphate</text>
        <dbReference type="Rhea" id="RHEA:10704"/>
        <dbReference type="Rhea" id="RHEA-COMP:9672"/>
        <dbReference type="Rhea" id="RHEA-COMP:9708"/>
        <dbReference type="ChEBI" id="CHEBI:30616"/>
        <dbReference type="ChEBI" id="CHEBI:33019"/>
        <dbReference type="ChEBI" id="CHEBI:57762"/>
        <dbReference type="ChEBI" id="CHEBI:78442"/>
        <dbReference type="ChEBI" id="CHEBI:78537"/>
        <dbReference type="ChEBI" id="CHEBI:456215"/>
        <dbReference type="EC" id="6.1.1.9"/>
    </reaction>
</comment>
<comment type="subunit">
    <text evidence="1">Monomer.</text>
</comment>
<comment type="subcellular location">
    <subcellularLocation>
        <location evidence="1">Cytoplasm</location>
    </subcellularLocation>
</comment>
<comment type="domain">
    <text evidence="1">ValRS has two distinct active sites: one for aminoacylation and one for editing. The misactivated threonine is translocated from the active site to the editing site.</text>
</comment>
<comment type="domain">
    <text evidence="1">The C-terminal coiled-coil domain is crucial for aminoacylation activity.</text>
</comment>
<comment type="similarity">
    <text evidence="1">Belongs to the class-I aminoacyl-tRNA synthetase family. ValS type 1 subfamily.</text>
</comment>
<feature type="chain" id="PRO_0000224570" description="Valine--tRNA ligase">
    <location>
        <begin position="1"/>
        <end position="884"/>
    </location>
</feature>
<feature type="coiled-coil region" evidence="1">
    <location>
        <begin position="809"/>
        <end position="844"/>
    </location>
</feature>
<feature type="short sequence motif" description="'HIGH' region">
    <location>
        <begin position="46"/>
        <end position="56"/>
    </location>
</feature>
<feature type="short sequence motif" description="'KMSKS' region">
    <location>
        <begin position="520"/>
        <end position="524"/>
    </location>
</feature>
<feature type="binding site" evidence="1">
    <location>
        <position position="523"/>
    </location>
    <ligand>
        <name>ATP</name>
        <dbReference type="ChEBI" id="CHEBI:30616"/>
    </ligand>
</feature>
<evidence type="ECO:0000255" key="1">
    <source>
        <dbReference type="HAMAP-Rule" id="MF_02004"/>
    </source>
</evidence>
<keyword id="KW-0030">Aminoacyl-tRNA synthetase</keyword>
<keyword id="KW-0067">ATP-binding</keyword>
<keyword id="KW-0175">Coiled coil</keyword>
<keyword id="KW-0963">Cytoplasm</keyword>
<keyword id="KW-0436">Ligase</keyword>
<keyword id="KW-0547">Nucleotide-binding</keyword>
<keyword id="KW-0648">Protein biosynthesis</keyword>
<accession>Q3K2S4</accession>
<proteinExistence type="inferred from homology"/>
<protein>
    <recommendedName>
        <fullName evidence="1">Valine--tRNA ligase</fullName>
        <ecNumber evidence="1">6.1.1.9</ecNumber>
    </recommendedName>
    <alternativeName>
        <fullName evidence="1">Valyl-tRNA synthetase</fullName>
        <shortName evidence="1">ValRS</shortName>
    </alternativeName>
</protein>